<evidence type="ECO:0000255" key="1">
    <source>
        <dbReference type="HAMAP-Rule" id="MF_01157"/>
    </source>
</evidence>
<sequence>MQERIKACFTESIQTQIAAAEALPDAISRAAMTLVQSLLNGNKILCCGNGTSAANAQHFAASMINRFETERPSLPAIALNTDNVVLTAIANDRLHDEVYAKQVRALGHAGDVLLAISTRGNSRDIVKAVEAAVTRDMTIVALTGYDGGELAGLLGPQDVEIRIPSHRSARIQEMHMLTVNCLCDLIDNTLFPHQDD</sequence>
<organism>
    <name type="scientific">Escherichia coli (strain ATCC 8739 / DSM 1576 / NBRC 3972 / NCIMB 8545 / WDCM 00012 / Crooks)</name>
    <dbReference type="NCBI Taxonomy" id="481805"/>
    <lineage>
        <taxon>Bacteria</taxon>
        <taxon>Pseudomonadati</taxon>
        <taxon>Pseudomonadota</taxon>
        <taxon>Gammaproteobacteria</taxon>
        <taxon>Enterobacterales</taxon>
        <taxon>Enterobacteriaceae</taxon>
        <taxon>Escherichia</taxon>
    </lineage>
</organism>
<feature type="chain" id="PRO_1000085352" description="DnaA initiator-associating protein DiaA">
    <location>
        <begin position="1"/>
        <end position="196"/>
    </location>
</feature>
<feature type="domain" description="SIS" evidence="1">
    <location>
        <begin position="34"/>
        <end position="196"/>
    </location>
</feature>
<name>DIAA_ECOLC</name>
<protein>
    <recommendedName>
        <fullName evidence="1">DnaA initiator-associating protein DiaA</fullName>
    </recommendedName>
</protein>
<dbReference type="EMBL" id="CP000946">
    <property type="protein sequence ID" value="ACA76226.1"/>
    <property type="molecule type" value="Genomic_DNA"/>
</dbReference>
<dbReference type="RefSeq" id="WP_001158034.1">
    <property type="nucleotide sequence ID" value="NZ_MTFT01000027.1"/>
</dbReference>
<dbReference type="SMR" id="B1IQX2"/>
<dbReference type="GeneID" id="93778835"/>
<dbReference type="KEGG" id="ecl:EcolC_0549"/>
<dbReference type="HOGENOM" id="CLU_080999_3_1_6"/>
<dbReference type="GO" id="GO:0097367">
    <property type="term" value="F:carbohydrate derivative binding"/>
    <property type="evidence" value="ECO:0007669"/>
    <property type="project" value="InterPro"/>
</dbReference>
<dbReference type="GO" id="GO:1901135">
    <property type="term" value="P:carbohydrate derivative metabolic process"/>
    <property type="evidence" value="ECO:0007669"/>
    <property type="project" value="InterPro"/>
</dbReference>
<dbReference type="GO" id="GO:0006260">
    <property type="term" value="P:DNA replication"/>
    <property type="evidence" value="ECO:0007669"/>
    <property type="project" value="UniProtKB-UniRule"/>
</dbReference>
<dbReference type="CDD" id="cd05006">
    <property type="entry name" value="SIS_GmhA"/>
    <property type="match status" value="1"/>
</dbReference>
<dbReference type="FunFam" id="3.40.50.10490:FF:000006">
    <property type="entry name" value="DnaA initiator-associating protein DiaA"/>
    <property type="match status" value="1"/>
</dbReference>
<dbReference type="Gene3D" id="3.40.50.10490">
    <property type="entry name" value="Glucose-6-phosphate isomerase like protein, domain 1"/>
    <property type="match status" value="1"/>
</dbReference>
<dbReference type="HAMAP" id="MF_01157">
    <property type="entry name" value="SIS_DiaA"/>
    <property type="match status" value="1"/>
</dbReference>
<dbReference type="InterPro" id="IPR023070">
    <property type="entry name" value="DiaA"/>
</dbReference>
<dbReference type="InterPro" id="IPR035461">
    <property type="entry name" value="GmhA/DiaA"/>
</dbReference>
<dbReference type="InterPro" id="IPR001347">
    <property type="entry name" value="SIS_dom"/>
</dbReference>
<dbReference type="InterPro" id="IPR046348">
    <property type="entry name" value="SIS_dom_sf"/>
</dbReference>
<dbReference type="InterPro" id="IPR050099">
    <property type="entry name" value="SIS_GmhA/DiaA_subfam"/>
</dbReference>
<dbReference type="NCBIfam" id="NF008138">
    <property type="entry name" value="PRK10886.1"/>
    <property type="match status" value="1"/>
</dbReference>
<dbReference type="NCBIfam" id="NF010546">
    <property type="entry name" value="PRK13936.1"/>
    <property type="match status" value="1"/>
</dbReference>
<dbReference type="PANTHER" id="PTHR30390:SF6">
    <property type="entry name" value="DNAA INITIATOR-ASSOCIATING PROTEIN DIAA"/>
    <property type="match status" value="1"/>
</dbReference>
<dbReference type="PANTHER" id="PTHR30390">
    <property type="entry name" value="SEDOHEPTULOSE 7-PHOSPHATE ISOMERASE / DNAA INITIATOR-ASSOCIATING FACTOR FOR REPLICATION INITIATION"/>
    <property type="match status" value="1"/>
</dbReference>
<dbReference type="Pfam" id="PF13580">
    <property type="entry name" value="SIS_2"/>
    <property type="match status" value="1"/>
</dbReference>
<dbReference type="SUPFAM" id="SSF53697">
    <property type="entry name" value="SIS domain"/>
    <property type="match status" value="1"/>
</dbReference>
<dbReference type="PROSITE" id="PS51464">
    <property type="entry name" value="SIS"/>
    <property type="match status" value="1"/>
</dbReference>
<accession>B1IQX2</accession>
<reference key="1">
    <citation type="submission" date="2008-02" db="EMBL/GenBank/DDBJ databases">
        <title>Complete sequence of Escherichia coli C str. ATCC 8739.</title>
        <authorList>
            <person name="Copeland A."/>
            <person name="Lucas S."/>
            <person name="Lapidus A."/>
            <person name="Glavina del Rio T."/>
            <person name="Dalin E."/>
            <person name="Tice H."/>
            <person name="Bruce D."/>
            <person name="Goodwin L."/>
            <person name="Pitluck S."/>
            <person name="Kiss H."/>
            <person name="Brettin T."/>
            <person name="Detter J.C."/>
            <person name="Han C."/>
            <person name="Kuske C.R."/>
            <person name="Schmutz J."/>
            <person name="Larimer F."/>
            <person name="Land M."/>
            <person name="Hauser L."/>
            <person name="Kyrpides N."/>
            <person name="Mikhailova N."/>
            <person name="Ingram L."/>
            <person name="Richardson P."/>
        </authorList>
    </citation>
    <scope>NUCLEOTIDE SEQUENCE [LARGE SCALE GENOMIC DNA]</scope>
    <source>
        <strain>ATCC 8739 / DSM 1576 / NBRC 3972 / NCIMB 8545 / WDCM 00012 / Crooks</strain>
    </source>
</reference>
<proteinExistence type="inferred from homology"/>
<keyword id="KW-0235">DNA replication</keyword>
<gene>
    <name evidence="1" type="primary">diaA</name>
    <name type="ordered locus">EcolC_0549</name>
</gene>
<comment type="function">
    <text evidence="1">Required for the timely initiation of chromosomal replication via direct interactions with the DnaA initiator protein.</text>
</comment>
<comment type="subunit">
    <text evidence="1">Homotetramer; dimer of dimers.</text>
</comment>
<comment type="similarity">
    <text evidence="1">Belongs to the SIS family. DiaA subfamily.</text>
</comment>